<dbReference type="EMBL" id="AE008923">
    <property type="protein sequence ID" value="AAM37232.1"/>
    <property type="molecule type" value="Genomic_DNA"/>
</dbReference>
<dbReference type="RefSeq" id="WP_003486066.1">
    <property type="nucleotide sequence ID" value="NC_003919.1"/>
</dbReference>
<dbReference type="SMR" id="Q8PJZ7"/>
<dbReference type="GeneID" id="66911493"/>
<dbReference type="KEGG" id="xac:XAC2380"/>
<dbReference type="eggNOG" id="COG0231">
    <property type="taxonomic scope" value="Bacteria"/>
</dbReference>
<dbReference type="HOGENOM" id="CLU_074944_0_0_6"/>
<dbReference type="UniPathway" id="UPA00345"/>
<dbReference type="Proteomes" id="UP000000576">
    <property type="component" value="Chromosome"/>
</dbReference>
<dbReference type="GO" id="GO:0005737">
    <property type="term" value="C:cytoplasm"/>
    <property type="evidence" value="ECO:0007669"/>
    <property type="project" value="UniProtKB-SubCell"/>
</dbReference>
<dbReference type="GO" id="GO:0003746">
    <property type="term" value="F:translation elongation factor activity"/>
    <property type="evidence" value="ECO:0007669"/>
    <property type="project" value="UniProtKB-UniRule"/>
</dbReference>
<dbReference type="GO" id="GO:0043043">
    <property type="term" value="P:peptide biosynthetic process"/>
    <property type="evidence" value="ECO:0007669"/>
    <property type="project" value="InterPro"/>
</dbReference>
<dbReference type="CDD" id="cd04470">
    <property type="entry name" value="S1_EF-P_repeat_1"/>
    <property type="match status" value="1"/>
</dbReference>
<dbReference type="CDD" id="cd05794">
    <property type="entry name" value="S1_EF-P_repeat_2"/>
    <property type="match status" value="1"/>
</dbReference>
<dbReference type="FunFam" id="2.30.30.30:FF:000039">
    <property type="entry name" value="Elongation factor P"/>
    <property type="match status" value="1"/>
</dbReference>
<dbReference type="FunFam" id="2.40.50.140:FF:000004">
    <property type="entry name" value="Elongation factor P"/>
    <property type="match status" value="1"/>
</dbReference>
<dbReference type="FunFam" id="2.40.50.140:FF:000009">
    <property type="entry name" value="Elongation factor P"/>
    <property type="match status" value="1"/>
</dbReference>
<dbReference type="Gene3D" id="2.30.30.30">
    <property type="match status" value="1"/>
</dbReference>
<dbReference type="Gene3D" id="2.40.50.140">
    <property type="entry name" value="Nucleic acid-binding proteins"/>
    <property type="match status" value="2"/>
</dbReference>
<dbReference type="HAMAP" id="MF_00141">
    <property type="entry name" value="EF_P"/>
    <property type="match status" value="1"/>
</dbReference>
<dbReference type="InterPro" id="IPR015365">
    <property type="entry name" value="Elong-fact-P_C"/>
</dbReference>
<dbReference type="InterPro" id="IPR012340">
    <property type="entry name" value="NA-bd_OB-fold"/>
</dbReference>
<dbReference type="InterPro" id="IPR014722">
    <property type="entry name" value="Rib_uL2_dom2"/>
</dbReference>
<dbReference type="InterPro" id="IPR020599">
    <property type="entry name" value="Transl_elong_fac_P/YeiP"/>
</dbReference>
<dbReference type="InterPro" id="IPR013185">
    <property type="entry name" value="Transl_elong_KOW-like"/>
</dbReference>
<dbReference type="InterPro" id="IPR001059">
    <property type="entry name" value="Transl_elong_P/YeiP_cen"/>
</dbReference>
<dbReference type="InterPro" id="IPR013852">
    <property type="entry name" value="Transl_elong_P/YeiP_CS"/>
</dbReference>
<dbReference type="InterPro" id="IPR011768">
    <property type="entry name" value="Transl_elongation_fac_P"/>
</dbReference>
<dbReference type="InterPro" id="IPR008991">
    <property type="entry name" value="Translation_prot_SH3-like_sf"/>
</dbReference>
<dbReference type="NCBIfam" id="TIGR00038">
    <property type="entry name" value="efp"/>
    <property type="match status" value="1"/>
</dbReference>
<dbReference type="NCBIfam" id="NF001810">
    <property type="entry name" value="PRK00529.1"/>
    <property type="match status" value="1"/>
</dbReference>
<dbReference type="PANTHER" id="PTHR30053">
    <property type="entry name" value="ELONGATION FACTOR P"/>
    <property type="match status" value="1"/>
</dbReference>
<dbReference type="PANTHER" id="PTHR30053:SF12">
    <property type="entry name" value="ELONGATION FACTOR P (EF-P) FAMILY PROTEIN"/>
    <property type="match status" value="1"/>
</dbReference>
<dbReference type="Pfam" id="PF01132">
    <property type="entry name" value="EFP"/>
    <property type="match status" value="1"/>
</dbReference>
<dbReference type="Pfam" id="PF08207">
    <property type="entry name" value="EFP_N"/>
    <property type="match status" value="1"/>
</dbReference>
<dbReference type="Pfam" id="PF09285">
    <property type="entry name" value="Elong-fact-P_C"/>
    <property type="match status" value="1"/>
</dbReference>
<dbReference type="PIRSF" id="PIRSF005901">
    <property type="entry name" value="EF-P"/>
    <property type="match status" value="1"/>
</dbReference>
<dbReference type="SMART" id="SM01185">
    <property type="entry name" value="EFP"/>
    <property type="match status" value="1"/>
</dbReference>
<dbReference type="SMART" id="SM00841">
    <property type="entry name" value="Elong-fact-P_C"/>
    <property type="match status" value="1"/>
</dbReference>
<dbReference type="SUPFAM" id="SSF50249">
    <property type="entry name" value="Nucleic acid-binding proteins"/>
    <property type="match status" value="2"/>
</dbReference>
<dbReference type="SUPFAM" id="SSF50104">
    <property type="entry name" value="Translation proteins SH3-like domain"/>
    <property type="match status" value="1"/>
</dbReference>
<dbReference type="PROSITE" id="PS01275">
    <property type="entry name" value="EFP"/>
    <property type="match status" value="1"/>
</dbReference>
<protein>
    <recommendedName>
        <fullName evidence="1">Elongation factor P</fullName>
        <shortName evidence="1">EF-P</shortName>
    </recommendedName>
</protein>
<gene>
    <name evidence="1" type="primary">efp</name>
    <name type="ordered locus">XAC2380</name>
</gene>
<name>EFP_XANAC</name>
<proteinExistence type="inferred from homology"/>
<organism>
    <name type="scientific">Xanthomonas axonopodis pv. citri (strain 306)</name>
    <dbReference type="NCBI Taxonomy" id="190486"/>
    <lineage>
        <taxon>Bacteria</taxon>
        <taxon>Pseudomonadati</taxon>
        <taxon>Pseudomonadota</taxon>
        <taxon>Gammaproteobacteria</taxon>
        <taxon>Lysobacterales</taxon>
        <taxon>Lysobacteraceae</taxon>
        <taxon>Xanthomonas</taxon>
    </lineage>
</organism>
<feature type="chain" id="PRO_0000094372" description="Elongation factor P">
    <location>
        <begin position="1"/>
        <end position="188"/>
    </location>
</feature>
<feature type="modified residue" description="N6-(3,6-diaminohexanoyl)-5-hydroxylysine" evidence="1">
    <location>
        <position position="34"/>
    </location>
</feature>
<sequence length="188" mass="20880">MATVGMNDVKNGMKILVNNEPAVITETEYVKPGKGQAFTRMKYRFIKSGRVVEMTMKATDDVEVADVVDTDMRYLYSDGEYWHFMDPDTFEQVQTDKAGMGGADKWLKGEEDCIVTLWNGTPIWVQPPNFVELKITETDPGVRGDTSGGGGKPATLETGAVVRVPLFVNQDEIIKVDTRSGEYSARVK</sequence>
<keyword id="KW-0963">Cytoplasm</keyword>
<keyword id="KW-0251">Elongation factor</keyword>
<keyword id="KW-0379">Hydroxylation</keyword>
<keyword id="KW-0648">Protein biosynthesis</keyword>
<reference key="1">
    <citation type="journal article" date="2002" name="Nature">
        <title>Comparison of the genomes of two Xanthomonas pathogens with differing host specificities.</title>
        <authorList>
            <person name="da Silva A.C.R."/>
            <person name="Ferro J.A."/>
            <person name="Reinach F.C."/>
            <person name="Farah C.S."/>
            <person name="Furlan L.R."/>
            <person name="Quaggio R.B."/>
            <person name="Monteiro-Vitorello C.B."/>
            <person name="Van Sluys M.A."/>
            <person name="Almeida N.F. Jr."/>
            <person name="Alves L.M.C."/>
            <person name="do Amaral A.M."/>
            <person name="Bertolini M.C."/>
            <person name="Camargo L.E.A."/>
            <person name="Camarotte G."/>
            <person name="Cannavan F."/>
            <person name="Cardozo J."/>
            <person name="Chambergo F."/>
            <person name="Ciapina L.P."/>
            <person name="Cicarelli R.M.B."/>
            <person name="Coutinho L.L."/>
            <person name="Cursino-Santos J.R."/>
            <person name="El-Dorry H."/>
            <person name="Faria J.B."/>
            <person name="Ferreira A.J.S."/>
            <person name="Ferreira R.C.C."/>
            <person name="Ferro M.I.T."/>
            <person name="Formighieri E.F."/>
            <person name="Franco M.C."/>
            <person name="Greggio C.C."/>
            <person name="Gruber A."/>
            <person name="Katsuyama A.M."/>
            <person name="Kishi L.T."/>
            <person name="Leite R.P."/>
            <person name="Lemos E.G.M."/>
            <person name="Lemos M.V.F."/>
            <person name="Locali E.C."/>
            <person name="Machado M.A."/>
            <person name="Madeira A.M.B.N."/>
            <person name="Martinez-Rossi N.M."/>
            <person name="Martins E.C."/>
            <person name="Meidanis J."/>
            <person name="Menck C.F.M."/>
            <person name="Miyaki C.Y."/>
            <person name="Moon D.H."/>
            <person name="Moreira L.M."/>
            <person name="Novo M.T.M."/>
            <person name="Okura V.K."/>
            <person name="Oliveira M.C."/>
            <person name="Oliveira V.R."/>
            <person name="Pereira H.A."/>
            <person name="Rossi A."/>
            <person name="Sena J.A.D."/>
            <person name="Silva C."/>
            <person name="de Souza R.F."/>
            <person name="Spinola L.A.F."/>
            <person name="Takita M.A."/>
            <person name="Tamura R.E."/>
            <person name="Teixeira E.C."/>
            <person name="Tezza R.I.D."/>
            <person name="Trindade dos Santos M."/>
            <person name="Truffi D."/>
            <person name="Tsai S.M."/>
            <person name="White F.F."/>
            <person name="Setubal J.C."/>
            <person name="Kitajima J.P."/>
        </authorList>
    </citation>
    <scope>NUCLEOTIDE SEQUENCE [LARGE SCALE GENOMIC DNA]</scope>
    <source>
        <strain>306</strain>
    </source>
</reference>
<comment type="function">
    <text evidence="1">Involved in peptide bond synthesis. Alleviates ribosome stalling that occurs when 3 or more consecutive Pro residues or the sequence PPG is present in a protein, possibly by augmenting the peptidyl transferase activity of the ribosome. Modification of Lys-34 is required for alleviation.</text>
</comment>
<comment type="pathway">
    <text evidence="1">Protein biosynthesis; polypeptide chain elongation.</text>
</comment>
<comment type="subcellular location">
    <subcellularLocation>
        <location evidence="1">Cytoplasm</location>
    </subcellularLocation>
</comment>
<comment type="PTM">
    <text evidence="1">May be beta-lysylated on the epsilon-amino group of Lys-34 by the combined action of EpmA and EpmB, and then hydroxylated on the C5 position of the same residue by EpmC (if this protein is present). Lysylation is critical for the stimulatory effect of EF-P on peptide-bond formation. The lysylation moiety may extend toward the peptidyltransferase center and stabilize the terminal 3-CCA end of the tRNA. Hydroxylation of the C5 position on Lys-34 may allow additional potential stabilizing hydrogen-bond interactions with the P-tRNA.</text>
</comment>
<comment type="similarity">
    <text evidence="1">Belongs to the elongation factor P family.</text>
</comment>
<evidence type="ECO:0000255" key="1">
    <source>
        <dbReference type="HAMAP-Rule" id="MF_00141"/>
    </source>
</evidence>
<accession>Q8PJZ7</accession>